<gene>
    <name evidence="1" type="primary">valS</name>
    <name type="ordered locus">NWMN_1558</name>
</gene>
<organism>
    <name type="scientific">Staphylococcus aureus (strain Newman)</name>
    <dbReference type="NCBI Taxonomy" id="426430"/>
    <lineage>
        <taxon>Bacteria</taxon>
        <taxon>Bacillati</taxon>
        <taxon>Bacillota</taxon>
        <taxon>Bacilli</taxon>
        <taxon>Bacillales</taxon>
        <taxon>Staphylococcaceae</taxon>
        <taxon>Staphylococcus</taxon>
    </lineage>
</organism>
<sequence length="876" mass="101724">MEMKPKYDPREVEAGRYEEWVKNGYFKPSEDKSKETYTIVIPPPNVTGKLHLGHAWDTTLQDIITRMKRMQGYDTLYLPGMDHAGIATQAKVEAKLNEQGITRYDLGREKFLEQAWDWKEEYASFIRAQWAKLGLGLDYSRERFTLDEGLSKAVKKVFVDLYNKGIIYRGERIINWDPKARTALSDIEVIHEDVQGAFYHFKYPYADGEGFIEIATTRPETMLGDTAIVVNPNDERYKDVIGKTVILPIVGRELPILADEYVDIDFGSGAMKVTPAHDPNDFEIGQRHQLENIIVMDENGKMNDKAGKYEGMDRFDCRKQLVKDLKEQDLVIKIEDHVHSVGHSERSGAVVEPYLSTQWFVRMEDLAKRSLDNQKTDDRIDFYPQRFEHTFNQWMENIRDWTISRQLWWGHQIPAWYHKETGEIYVGEEAPTDIENWQQDEDVLDTWFSSALWPFSTLGWPDLESEDFKRYYPTNALVTGYDIIFFWVARMIFQGLEFTDRRPFNDVLLHGLVRAEDGRKMSKSLGNGVDPMDVIDEYGADSLRYFLATGSSPGHDLRYSTEKVESVWNFINKIWNGARFSLMNIGEDFKVEDIDLSGNLSLADKWILTRLNETIATVTDLSDKYEFGEVGRALYNFIWDDFCDWYIEMSKIPMNSNDEEQKQVTRSVLSYTLDNIMRMLHPFMPFVTEKIWQSLPHEGDTIVKASWPEVRESLIFEESKQTMQQLVEIIKSVRQSRVEVNTPLSKEIPILIQAKDKEIETTLSQNKDYLIKFCNPSTLNISTDVEIPEKAMTSVVIAGKVVLPLEGLIDMDKEISRLEKELAKLQSELDRVDKKLSNENFVSKAPEKVINEEKRKKQDYQEKYDGVKARIEQLKA</sequence>
<name>SYV_STAAE</name>
<dbReference type="EC" id="6.1.1.9" evidence="1"/>
<dbReference type="EMBL" id="AP009351">
    <property type="protein sequence ID" value="BAF67830.1"/>
    <property type="molecule type" value="Genomic_DNA"/>
</dbReference>
<dbReference type="RefSeq" id="WP_000425353.1">
    <property type="nucleotide sequence ID" value="NZ_JBBIAE010000001.1"/>
</dbReference>
<dbReference type="SMR" id="A6QHJ8"/>
<dbReference type="KEGG" id="sae:NWMN_1558"/>
<dbReference type="HOGENOM" id="CLU_001493_0_2_9"/>
<dbReference type="Proteomes" id="UP000006386">
    <property type="component" value="Chromosome"/>
</dbReference>
<dbReference type="GO" id="GO:0005829">
    <property type="term" value="C:cytosol"/>
    <property type="evidence" value="ECO:0007669"/>
    <property type="project" value="TreeGrafter"/>
</dbReference>
<dbReference type="GO" id="GO:0002161">
    <property type="term" value="F:aminoacyl-tRNA deacylase activity"/>
    <property type="evidence" value="ECO:0007669"/>
    <property type="project" value="InterPro"/>
</dbReference>
<dbReference type="GO" id="GO:0005524">
    <property type="term" value="F:ATP binding"/>
    <property type="evidence" value="ECO:0007669"/>
    <property type="project" value="UniProtKB-UniRule"/>
</dbReference>
<dbReference type="GO" id="GO:0004832">
    <property type="term" value="F:valine-tRNA ligase activity"/>
    <property type="evidence" value="ECO:0007669"/>
    <property type="project" value="UniProtKB-UniRule"/>
</dbReference>
<dbReference type="GO" id="GO:0006438">
    <property type="term" value="P:valyl-tRNA aminoacylation"/>
    <property type="evidence" value="ECO:0007669"/>
    <property type="project" value="UniProtKB-UniRule"/>
</dbReference>
<dbReference type="CDD" id="cd07962">
    <property type="entry name" value="Anticodon_Ia_Val"/>
    <property type="match status" value="1"/>
</dbReference>
<dbReference type="CDD" id="cd00817">
    <property type="entry name" value="ValRS_core"/>
    <property type="match status" value="1"/>
</dbReference>
<dbReference type="FunFam" id="1.10.287.380:FF:000001">
    <property type="entry name" value="Valine--tRNA ligase"/>
    <property type="match status" value="1"/>
</dbReference>
<dbReference type="FunFam" id="1.10.730.10:FF:000014">
    <property type="entry name" value="Valine--tRNA ligase"/>
    <property type="match status" value="1"/>
</dbReference>
<dbReference type="FunFam" id="3.40.50.620:FF:000032">
    <property type="entry name" value="Valine--tRNA ligase"/>
    <property type="match status" value="1"/>
</dbReference>
<dbReference type="FunFam" id="3.40.50.620:FF:000098">
    <property type="entry name" value="Valine--tRNA ligase"/>
    <property type="match status" value="1"/>
</dbReference>
<dbReference type="FunFam" id="3.90.740.10:FF:000005">
    <property type="entry name" value="Valine--tRNA ligase, mitochondrial"/>
    <property type="match status" value="1"/>
</dbReference>
<dbReference type="Gene3D" id="3.40.50.620">
    <property type="entry name" value="HUPs"/>
    <property type="match status" value="2"/>
</dbReference>
<dbReference type="Gene3D" id="1.10.730.10">
    <property type="entry name" value="Isoleucyl-tRNA Synthetase, Domain 1"/>
    <property type="match status" value="1"/>
</dbReference>
<dbReference type="Gene3D" id="1.10.287.380">
    <property type="entry name" value="Valyl-tRNA synthetase, C-terminal domain"/>
    <property type="match status" value="1"/>
</dbReference>
<dbReference type="Gene3D" id="3.90.740.10">
    <property type="entry name" value="Valyl/Leucyl/Isoleucyl-tRNA synthetase, editing domain"/>
    <property type="match status" value="1"/>
</dbReference>
<dbReference type="HAMAP" id="MF_02004">
    <property type="entry name" value="Val_tRNA_synth_type1"/>
    <property type="match status" value="1"/>
</dbReference>
<dbReference type="InterPro" id="IPR001412">
    <property type="entry name" value="aa-tRNA-synth_I_CS"/>
</dbReference>
<dbReference type="InterPro" id="IPR002300">
    <property type="entry name" value="aa-tRNA-synth_Ia"/>
</dbReference>
<dbReference type="InterPro" id="IPR033705">
    <property type="entry name" value="Anticodon_Ia_Val"/>
</dbReference>
<dbReference type="InterPro" id="IPR013155">
    <property type="entry name" value="M/V/L/I-tRNA-synth_anticd-bd"/>
</dbReference>
<dbReference type="InterPro" id="IPR014729">
    <property type="entry name" value="Rossmann-like_a/b/a_fold"/>
</dbReference>
<dbReference type="InterPro" id="IPR010978">
    <property type="entry name" value="tRNA-bd_arm"/>
</dbReference>
<dbReference type="InterPro" id="IPR009080">
    <property type="entry name" value="tRNAsynth_Ia_anticodon-bd"/>
</dbReference>
<dbReference type="InterPro" id="IPR037118">
    <property type="entry name" value="Val-tRNA_synth_C_sf"/>
</dbReference>
<dbReference type="InterPro" id="IPR019499">
    <property type="entry name" value="Val-tRNA_synth_tRNA-bd"/>
</dbReference>
<dbReference type="InterPro" id="IPR009008">
    <property type="entry name" value="Val/Leu/Ile-tRNA-synth_edit"/>
</dbReference>
<dbReference type="InterPro" id="IPR002303">
    <property type="entry name" value="Valyl-tRNA_ligase"/>
</dbReference>
<dbReference type="NCBIfam" id="NF004349">
    <property type="entry name" value="PRK05729.1"/>
    <property type="match status" value="1"/>
</dbReference>
<dbReference type="NCBIfam" id="TIGR00422">
    <property type="entry name" value="valS"/>
    <property type="match status" value="1"/>
</dbReference>
<dbReference type="PANTHER" id="PTHR11946:SF93">
    <property type="entry name" value="VALINE--TRNA LIGASE, CHLOROPLASTIC_MITOCHONDRIAL 2"/>
    <property type="match status" value="1"/>
</dbReference>
<dbReference type="PANTHER" id="PTHR11946">
    <property type="entry name" value="VALYL-TRNA SYNTHETASES"/>
    <property type="match status" value="1"/>
</dbReference>
<dbReference type="Pfam" id="PF08264">
    <property type="entry name" value="Anticodon_1"/>
    <property type="match status" value="1"/>
</dbReference>
<dbReference type="Pfam" id="PF00133">
    <property type="entry name" value="tRNA-synt_1"/>
    <property type="match status" value="1"/>
</dbReference>
<dbReference type="Pfam" id="PF10458">
    <property type="entry name" value="Val_tRNA-synt_C"/>
    <property type="match status" value="1"/>
</dbReference>
<dbReference type="PRINTS" id="PR00986">
    <property type="entry name" value="TRNASYNTHVAL"/>
</dbReference>
<dbReference type="SUPFAM" id="SSF47323">
    <property type="entry name" value="Anticodon-binding domain of a subclass of class I aminoacyl-tRNA synthetases"/>
    <property type="match status" value="1"/>
</dbReference>
<dbReference type="SUPFAM" id="SSF52374">
    <property type="entry name" value="Nucleotidylyl transferase"/>
    <property type="match status" value="1"/>
</dbReference>
<dbReference type="SUPFAM" id="SSF46589">
    <property type="entry name" value="tRNA-binding arm"/>
    <property type="match status" value="1"/>
</dbReference>
<dbReference type="SUPFAM" id="SSF50677">
    <property type="entry name" value="ValRS/IleRS/LeuRS editing domain"/>
    <property type="match status" value="1"/>
</dbReference>
<dbReference type="PROSITE" id="PS00178">
    <property type="entry name" value="AA_TRNA_LIGASE_I"/>
    <property type="match status" value="1"/>
</dbReference>
<proteinExistence type="inferred from homology"/>
<evidence type="ECO:0000255" key="1">
    <source>
        <dbReference type="HAMAP-Rule" id="MF_02004"/>
    </source>
</evidence>
<feature type="chain" id="PRO_1000073717" description="Valine--tRNA ligase">
    <location>
        <begin position="1"/>
        <end position="876"/>
    </location>
</feature>
<feature type="coiled-coil region" evidence="1">
    <location>
        <begin position="805"/>
        <end position="876"/>
    </location>
</feature>
<feature type="short sequence motif" description="'HIGH' region">
    <location>
        <begin position="44"/>
        <end position="54"/>
    </location>
</feature>
<feature type="short sequence motif" description="'KMSKS' region">
    <location>
        <begin position="520"/>
        <end position="524"/>
    </location>
</feature>
<feature type="binding site" evidence="1">
    <location>
        <position position="523"/>
    </location>
    <ligand>
        <name>ATP</name>
        <dbReference type="ChEBI" id="CHEBI:30616"/>
    </ligand>
</feature>
<keyword id="KW-0030">Aminoacyl-tRNA synthetase</keyword>
<keyword id="KW-0067">ATP-binding</keyword>
<keyword id="KW-0175">Coiled coil</keyword>
<keyword id="KW-0963">Cytoplasm</keyword>
<keyword id="KW-0436">Ligase</keyword>
<keyword id="KW-0547">Nucleotide-binding</keyword>
<keyword id="KW-0648">Protein biosynthesis</keyword>
<accession>A6QHJ8</accession>
<protein>
    <recommendedName>
        <fullName evidence="1">Valine--tRNA ligase</fullName>
        <ecNumber evidence="1">6.1.1.9</ecNumber>
    </recommendedName>
    <alternativeName>
        <fullName evidence="1">Valyl-tRNA synthetase</fullName>
        <shortName evidence="1">ValRS</shortName>
    </alternativeName>
</protein>
<reference key="1">
    <citation type="journal article" date="2008" name="J. Bacteriol.">
        <title>Genome sequence of Staphylococcus aureus strain Newman and comparative analysis of staphylococcal genomes: polymorphism and evolution of two major pathogenicity islands.</title>
        <authorList>
            <person name="Baba T."/>
            <person name="Bae T."/>
            <person name="Schneewind O."/>
            <person name="Takeuchi F."/>
            <person name="Hiramatsu K."/>
        </authorList>
    </citation>
    <scope>NUCLEOTIDE SEQUENCE [LARGE SCALE GENOMIC DNA]</scope>
    <source>
        <strain>Newman</strain>
    </source>
</reference>
<comment type="function">
    <text evidence="1">Catalyzes the attachment of valine to tRNA(Val). As ValRS can inadvertently accommodate and process structurally similar amino acids such as threonine, to avoid such errors, it has a 'posttransfer' editing activity that hydrolyzes mischarged Thr-tRNA(Val) in a tRNA-dependent manner.</text>
</comment>
<comment type="catalytic activity">
    <reaction evidence="1">
        <text>tRNA(Val) + L-valine + ATP = L-valyl-tRNA(Val) + AMP + diphosphate</text>
        <dbReference type="Rhea" id="RHEA:10704"/>
        <dbReference type="Rhea" id="RHEA-COMP:9672"/>
        <dbReference type="Rhea" id="RHEA-COMP:9708"/>
        <dbReference type="ChEBI" id="CHEBI:30616"/>
        <dbReference type="ChEBI" id="CHEBI:33019"/>
        <dbReference type="ChEBI" id="CHEBI:57762"/>
        <dbReference type="ChEBI" id="CHEBI:78442"/>
        <dbReference type="ChEBI" id="CHEBI:78537"/>
        <dbReference type="ChEBI" id="CHEBI:456215"/>
        <dbReference type="EC" id="6.1.1.9"/>
    </reaction>
</comment>
<comment type="subunit">
    <text evidence="1">Monomer.</text>
</comment>
<comment type="subcellular location">
    <subcellularLocation>
        <location evidence="1">Cytoplasm</location>
    </subcellularLocation>
</comment>
<comment type="domain">
    <text evidence="1">ValRS has two distinct active sites: one for aminoacylation and one for editing. The misactivated threonine is translocated from the active site to the editing site.</text>
</comment>
<comment type="domain">
    <text evidence="1">The C-terminal coiled-coil domain is crucial for aminoacylation activity.</text>
</comment>
<comment type="similarity">
    <text evidence="1">Belongs to the class-I aminoacyl-tRNA synthetase family. ValS type 1 subfamily.</text>
</comment>